<organism>
    <name type="scientific">Escherichia coli (strain K12)</name>
    <dbReference type="NCBI Taxonomy" id="83333"/>
    <lineage>
        <taxon>Bacteria</taxon>
        <taxon>Pseudomonadati</taxon>
        <taxon>Pseudomonadota</taxon>
        <taxon>Gammaproteobacteria</taxon>
        <taxon>Enterobacterales</taxon>
        <taxon>Enterobacteriaceae</taxon>
        <taxon>Escherichia</taxon>
    </lineage>
</organism>
<comment type="function">
    <text evidence="2 3 4">Catalyzes the dephosphorylation of 5-amino-6-(5-phospho-D-ribitylamino)uracil, and thus could be involved in the riboflavin biosynthesis pathway (PubMed:24123841). Is also able to dephosphorylate flavin mononucleotide (FMN) and other phosphoric acid esters (PubMed:16990279, PubMed:24123841). YigB is important for the formation of dormant persister cells (PubMed:18519731).</text>
</comment>
<comment type="catalytic activity">
    <reaction evidence="4">
        <text>5-amino-6-(5-phospho-D-ribitylamino)uracil + H2O = 5-amino-6-(D-ribitylamino)uracil + phosphate</text>
        <dbReference type="Rhea" id="RHEA:25197"/>
        <dbReference type="ChEBI" id="CHEBI:15377"/>
        <dbReference type="ChEBI" id="CHEBI:15934"/>
        <dbReference type="ChEBI" id="CHEBI:43474"/>
        <dbReference type="ChEBI" id="CHEBI:58421"/>
        <dbReference type="EC" id="3.1.3.104"/>
    </reaction>
</comment>
<comment type="cofactor">
    <cofactor evidence="2">
        <name>Mg(2+)</name>
        <dbReference type="ChEBI" id="CHEBI:18420"/>
    </cofactor>
    <cofactor evidence="2">
        <name>Mn(2+)</name>
        <dbReference type="ChEBI" id="CHEBI:29035"/>
    </cofactor>
    <cofactor evidence="2">
        <name>Co(2+)</name>
        <dbReference type="ChEBI" id="CHEBI:48828"/>
    </cofactor>
    <cofactor evidence="2">
        <name>Zn(2+)</name>
        <dbReference type="ChEBI" id="CHEBI:29105"/>
    </cofactor>
    <text evidence="2">Magnesium. Can also use other divalent metal cations as manganese, cobalt or zinc.</text>
</comment>
<comment type="biophysicochemical properties">
    <kinetics>
        <KM evidence="4">20 uM for 5-amino-6-(5-phospho-D-ribitylamino)uracil</KM>
        <KM evidence="2">1 mM for FMN (with magnesium ions as cofactor and at pH 9)</KM>
        <Vmax evidence="4">4.0 umol/min/mg enzyme with 5-amino-6-(5-phospho-D-ribitylamino)uracil as substrate</Vmax>
    </kinetics>
    <phDependence>
        <text evidence="2">Optimum pH is 6-7.5.</text>
    </phDependence>
</comment>
<comment type="pathway">
    <text evidence="7">Cofactor biosynthesis; riboflavin biosynthesis; 5-amino-6-(D-ribitylamino)uracil from GTP: step 4/4.</text>
</comment>
<comment type="disruption phenotype">
    <text evidence="4">Cells lacking this gene can grow in the absence of exogenous riboflavin; this may be due to the presence of the functionally redundant protein YbjI.</text>
</comment>
<comment type="similarity">
    <text evidence="6">Belongs to the HAD-like hydrolase superfamily.</text>
</comment>
<accession>P0ADP0</accession>
<accession>P23306</accession>
<accession>P76757</accession>
<accession>Q2M8B8</accession>
<protein>
    <recommendedName>
        <fullName evidence="5">5-amino-6-(5-phospho-D-ribitylamino)uracil phosphatase YigB</fullName>
        <ecNumber evidence="4">3.1.3.104</ecNumber>
    </recommendedName>
</protein>
<proteinExistence type="evidence at protein level"/>
<reference key="1">
    <citation type="journal article" date="1990" name="J. Bacteriol.">
        <title>Recombination at ColE1 cer requires the Escherichia coli xerC gene product, a member of the lambda integrase family of site-specific recombinases.</title>
        <authorList>
            <person name="Colloms S.D."/>
            <person name="Sykora P."/>
            <person name="Szatmari G."/>
            <person name="Sherratt D.J."/>
        </authorList>
    </citation>
    <scope>NUCLEOTIDE SEQUENCE [GENOMIC DNA]</scope>
    <source>
        <strain>K12</strain>
    </source>
</reference>
<reference key="2">
    <citation type="journal article" date="1992" name="Science">
        <title>Analysis of the Escherichia coli genome: DNA sequence of the region from 84.5 to 86.5 minutes.</title>
        <authorList>
            <person name="Daniels D.L."/>
            <person name="Plunkett G. III"/>
            <person name="Burland V.D."/>
            <person name="Blattner F.R."/>
        </authorList>
    </citation>
    <scope>NUCLEOTIDE SEQUENCE [LARGE SCALE GENOMIC DNA]</scope>
    <source>
        <strain>K12 / MG1655 / ATCC 47076</strain>
    </source>
</reference>
<reference key="3">
    <citation type="journal article" date="1997" name="Science">
        <title>The complete genome sequence of Escherichia coli K-12.</title>
        <authorList>
            <person name="Blattner F.R."/>
            <person name="Plunkett G. III"/>
            <person name="Bloch C.A."/>
            <person name="Perna N.T."/>
            <person name="Burland V."/>
            <person name="Riley M."/>
            <person name="Collado-Vides J."/>
            <person name="Glasner J.D."/>
            <person name="Rode C.K."/>
            <person name="Mayhew G.F."/>
            <person name="Gregor J."/>
            <person name="Davis N.W."/>
            <person name="Kirkpatrick H.A."/>
            <person name="Goeden M.A."/>
            <person name="Rose D.J."/>
            <person name="Mau B."/>
            <person name="Shao Y."/>
        </authorList>
    </citation>
    <scope>NUCLEOTIDE SEQUENCE [LARGE SCALE GENOMIC DNA]</scope>
    <scope>SEQUENCE REVISION TO 13</scope>
    <source>
        <strain>K12 / MG1655 / ATCC 47076</strain>
    </source>
</reference>
<reference key="4">
    <citation type="journal article" date="2006" name="Mol. Syst. Biol.">
        <title>Highly accurate genome sequences of Escherichia coli K-12 strains MG1655 and W3110.</title>
        <authorList>
            <person name="Hayashi K."/>
            <person name="Morooka N."/>
            <person name="Yamamoto Y."/>
            <person name="Fujita K."/>
            <person name="Isono K."/>
            <person name="Choi S."/>
            <person name="Ohtsubo E."/>
            <person name="Baba T."/>
            <person name="Wanner B.L."/>
            <person name="Mori H."/>
            <person name="Horiuchi T."/>
        </authorList>
    </citation>
    <scope>NUCLEOTIDE SEQUENCE [LARGE SCALE GENOMIC DNA]</scope>
    <source>
        <strain>K12 / W3110 / ATCC 27325 / DSM 5911</strain>
    </source>
</reference>
<reference key="5">
    <citation type="journal article" date="1984" name="Nucleic Acids Res.">
        <title>The nucleotide sequence of the uvrD gene of E. coli.</title>
        <authorList>
            <person name="Finch P.W."/>
            <person name="Emmerson P.T."/>
        </authorList>
    </citation>
    <scope>NUCLEOTIDE SEQUENCE [GENOMIC DNA] OF 183-238</scope>
</reference>
<reference key="6">
    <citation type="journal article" date="1983" name="Nucleic Acids Res.">
        <title>Transcription of the uvrD gene of Escherichia coli is controlled by the lexA repressor and by attenuation.</title>
        <authorList>
            <person name="Easton A.M."/>
            <person name="Kushner S.R."/>
        </authorList>
    </citation>
    <scope>NUCLEOTIDE SEQUENCE [GENOMIC DNA] OF 183-238</scope>
</reference>
<reference key="7">
    <citation type="journal article" date="2006" name="J. Biol. Chem.">
        <title>Genome-wide analysis of substrate specificities of the Escherichia coli haloacid dehalogenase-like phosphatase family.</title>
        <authorList>
            <person name="Kuznetsova E."/>
            <person name="Proudfoot M."/>
            <person name="Gonzalez C.F."/>
            <person name="Brown G."/>
            <person name="Omelchenko M.V."/>
            <person name="Borozan I."/>
            <person name="Carmel L."/>
            <person name="Wolf Y.I."/>
            <person name="Mori H."/>
            <person name="Savchenko A.V."/>
            <person name="Arrowsmith C.H."/>
            <person name="Koonin E.V."/>
            <person name="Edwards A.M."/>
            <person name="Yakunin A.F."/>
        </authorList>
    </citation>
    <scope>FUNCTION AS A PHOSPHATASE</scope>
    <scope>BIOPHYSICOCHEMICAL PROPERTIES</scope>
    <scope>SUBSTRATE SPECIFICITY</scope>
    <scope>COFACTOR</scope>
</reference>
<reference key="8">
    <citation type="journal article" date="2008" name="Antimicrob. Agents Chemother.">
        <title>Role of global regulators and nucleotide metabolism in antibiotic tolerance in Escherichia coli.</title>
        <authorList>
            <person name="Hansen S."/>
            <person name="Lewis K."/>
            <person name="Vulic M."/>
        </authorList>
    </citation>
    <scope>FUNCTION IN THE FORMATION OF DORMANT PERSISTER CELLS</scope>
</reference>
<reference key="9">
    <citation type="journal article" date="2013" name="ChemBioChem">
        <title>Enzymes from the haloacid dehalogenase (HAD) superfamily catalyse the elusive dephosphorylation step of riboflavin biosynthesis.</title>
        <authorList>
            <person name="Haase I."/>
            <person name="Sarge S."/>
            <person name="Illarionov B."/>
            <person name="Laudert D."/>
            <person name="Hohmann H.P."/>
            <person name="Bacher A."/>
            <person name="Fischer M."/>
        </authorList>
    </citation>
    <scope>FUNCTION</scope>
    <scope>CATALYTIC ACTIVITY</scope>
    <scope>BIOPHYSICOCHEMICAL PROPERTIES</scope>
    <scope>SUBSTRATE SPECIFICITY</scope>
    <scope>DISRUPTION PHENOTYPE</scope>
    <scope>PATHWAY</scope>
</reference>
<evidence type="ECO:0000250" key="1"/>
<evidence type="ECO:0000269" key="2">
    <source>
    </source>
</evidence>
<evidence type="ECO:0000269" key="3">
    <source>
    </source>
</evidence>
<evidence type="ECO:0000269" key="4">
    <source>
    </source>
</evidence>
<evidence type="ECO:0000303" key="5">
    <source>
    </source>
</evidence>
<evidence type="ECO:0000305" key="6"/>
<evidence type="ECO:0000305" key="7">
    <source>
    </source>
</evidence>
<sequence>MRFYRPLGRISALTFDLDDTLYDNRPVILRTEREALTFVQNYHPALRSFQNEDLQRLRQAVREAEPEIYHDVTRWRFRSIEQAMLDAGLSAEEASAGAHAAMINFAKWRSRIDVPQQTHDTLKQLAKKWPLVAITNGNAQPELFGLGDYFEFVLRAGPHGRSKPFSDMYFLAAEKLNVPIGEILHVGDDLTTDVGGAIRSGMQACWIRPENGDLMQTWDSRLLPHLEISRLASLTSLI</sequence>
<feature type="chain" id="PRO_0000169651" description="5-amino-6-(5-phospho-D-ribitylamino)uracil phosphatase YigB">
    <location>
        <begin position="1"/>
        <end position="238"/>
    </location>
</feature>
<feature type="active site" description="Nucleophile" evidence="1">
    <location>
        <position position="16"/>
    </location>
</feature>
<feature type="binding site" evidence="1">
    <location>
        <begin position="16"/>
        <end position="18"/>
    </location>
    <ligand>
        <name>substrate</name>
    </ligand>
</feature>
<feature type="binding site" evidence="1">
    <location>
        <position position="16"/>
    </location>
    <ligand>
        <name>Mg(2+)</name>
        <dbReference type="ChEBI" id="CHEBI:18420"/>
    </ligand>
</feature>
<feature type="binding site" evidence="1">
    <location>
        <position position="18"/>
    </location>
    <ligand>
        <name>Mg(2+)</name>
        <dbReference type="ChEBI" id="CHEBI:18420"/>
    </ligand>
</feature>
<feature type="binding site" evidence="1">
    <location>
        <position position="188"/>
    </location>
    <ligand>
        <name>Mg(2+)</name>
        <dbReference type="ChEBI" id="CHEBI:18420"/>
    </ligand>
</feature>
<feature type="sequence conflict" description="In Ref. 2; AAA67608." evidence="6" ref="2">
    <original>L</original>
    <variation>V</variation>
    <location>
        <position position="13"/>
    </location>
</feature>
<feature type="sequence conflict" description="In Ref. 1; AAA24764." evidence="6" ref="1">
    <original>S</original>
    <variation>T</variation>
    <location>
        <position position="200"/>
    </location>
</feature>
<gene>
    <name type="primary">yigB</name>
    <name type="ordered locus">b3812</name>
    <name type="ordered locus">JW3785</name>
</gene>
<name>YIGB_ECOLI</name>
<dbReference type="EC" id="3.1.3.104" evidence="4"/>
<dbReference type="EMBL" id="M38257">
    <property type="protein sequence ID" value="AAA24764.1"/>
    <property type="molecule type" value="Genomic_DNA"/>
</dbReference>
<dbReference type="EMBL" id="M87049">
    <property type="protein sequence ID" value="AAA67608.1"/>
    <property type="molecule type" value="Genomic_DNA"/>
</dbReference>
<dbReference type="EMBL" id="U00096">
    <property type="protein sequence ID" value="AAC76815.1"/>
    <property type="molecule type" value="Genomic_DNA"/>
</dbReference>
<dbReference type="EMBL" id="AP009048">
    <property type="protein sequence ID" value="BAE77488.1"/>
    <property type="molecule type" value="Genomic_DNA"/>
</dbReference>
<dbReference type="EMBL" id="X00738">
    <property type="status" value="NOT_ANNOTATED_CDS"/>
    <property type="molecule type" value="Genomic_DNA"/>
</dbReference>
<dbReference type="PIR" id="D37841">
    <property type="entry name" value="D37841"/>
</dbReference>
<dbReference type="RefSeq" id="NP_418257.1">
    <property type="nucleotide sequence ID" value="NC_000913.3"/>
</dbReference>
<dbReference type="RefSeq" id="WP_001213584.1">
    <property type="nucleotide sequence ID" value="NZ_STEB01000021.1"/>
</dbReference>
<dbReference type="SMR" id="P0ADP0"/>
<dbReference type="BioGRID" id="4263283">
    <property type="interactions" value="15"/>
</dbReference>
<dbReference type="DIP" id="DIP-48086N"/>
<dbReference type="FunCoup" id="P0ADP0">
    <property type="interactions" value="229"/>
</dbReference>
<dbReference type="IntAct" id="P0ADP0">
    <property type="interactions" value="1"/>
</dbReference>
<dbReference type="STRING" id="511145.b3812"/>
<dbReference type="jPOST" id="P0ADP0"/>
<dbReference type="PaxDb" id="511145-b3812"/>
<dbReference type="DNASU" id="948357"/>
<dbReference type="EnsemblBacteria" id="AAC76815">
    <property type="protein sequence ID" value="AAC76815"/>
    <property type="gene ID" value="b3812"/>
</dbReference>
<dbReference type="GeneID" id="93778131"/>
<dbReference type="GeneID" id="948357"/>
<dbReference type="KEGG" id="ecj:JW3785"/>
<dbReference type="KEGG" id="eco:b3812"/>
<dbReference type="KEGG" id="ecoc:C3026_20635"/>
<dbReference type="PATRIC" id="fig|1411691.4.peg.2895"/>
<dbReference type="EchoBASE" id="EB1187"/>
<dbReference type="eggNOG" id="COG1011">
    <property type="taxonomic scope" value="Bacteria"/>
</dbReference>
<dbReference type="HOGENOM" id="CLU_045011_8_2_6"/>
<dbReference type="InParanoid" id="P0ADP0"/>
<dbReference type="OMA" id="PQETHDT"/>
<dbReference type="OrthoDB" id="367448at2"/>
<dbReference type="PhylomeDB" id="P0ADP0"/>
<dbReference type="BioCyc" id="EcoCyc:EG11202-MONOMER"/>
<dbReference type="BioCyc" id="MetaCyc:EG11202-MONOMER"/>
<dbReference type="UniPathway" id="UPA00275">
    <property type="reaction ID" value="UER00403"/>
</dbReference>
<dbReference type="PRO" id="PR:P0ADP0"/>
<dbReference type="Proteomes" id="UP000000625">
    <property type="component" value="Chromosome"/>
</dbReference>
<dbReference type="GO" id="GO:0043726">
    <property type="term" value="F:5-amino-6-(5-phosphoribitylamino)uracil phosphatase activity"/>
    <property type="evidence" value="ECO:0000314"/>
    <property type="project" value="EcoCyc"/>
</dbReference>
<dbReference type="GO" id="GO:0000287">
    <property type="term" value="F:magnesium ion binding"/>
    <property type="evidence" value="ECO:0000314"/>
    <property type="project" value="UniProtKB"/>
</dbReference>
<dbReference type="GO" id="GO:0016791">
    <property type="term" value="F:phosphatase activity"/>
    <property type="evidence" value="ECO:0000314"/>
    <property type="project" value="EcoCyc"/>
</dbReference>
<dbReference type="GO" id="GO:0022611">
    <property type="term" value="P:dormancy process"/>
    <property type="evidence" value="ECO:0000315"/>
    <property type="project" value="EcoCyc"/>
</dbReference>
<dbReference type="GO" id="GO:0009231">
    <property type="term" value="P:riboflavin biosynthetic process"/>
    <property type="evidence" value="ECO:0000314"/>
    <property type="project" value="EcoCyc"/>
</dbReference>
<dbReference type="FunFam" id="3.40.50.1000:FF:000064">
    <property type="entry name" value="HAD hydrolase, family IA"/>
    <property type="match status" value="1"/>
</dbReference>
<dbReference type="Gene3D" id="1.20.120.1600">
    <property type="match status" value="1"/>
</dbReference>
<dbReference type="Gene3D" id="3.40.50.1000">
    <property type="entry name" value="HAD superfamily/HAD-like"/>
    <property type="match status" value="1"/>
</dbReference>
<dbReference type="InterPro" id="IPR051400">
    <property type="entry name" value="HAD-like_hydrolase"/>
</dbReference>
<dbReference type="InterPro" id="IPR036412">
    <property type="entry name" value="HAD-like_sf"/>
</dbReference>
<dbReference type="InterPro" id="IPR006439">
    <property type="entry name" value="HAD-SF_hydro_IA"/>
</dbReference>
<dbReference type="InterPro" id="IPR023214">
    <property type="entry name" value="HAD_sf"/>
</dbReference>
<dbReference type="NCBIfam" id="TIGR01549">
    <property type="entry name" value="HAD-SF-IA-v1"/>
    <property type="match status" value="1"/>
</dbReference>
<dbReference type="NCBIfam" id="NF008018">
    <property type="entry name" value="PRK10748.1"/>
    <property type="match status" value="1"/>
</dbReference>
<dbReference type="PANTHER" id="PTHR46470:SF4">
    <property type="entry name" value="5-AMINO-6-(5-PHOSPHO-D-RIBITYLAMINO)URACIL PHOSPHATASE YIGB"/>
    <property type="match status" value="1"/>
</dbReference>
<dbReference type="PANTHER" id="PTHR46470">
    <property type="entry name" value="N-ACYLNEURAMINATE-9-PHOSPHATASE"/>
    <property type="match status" value="1"/>
</dbReference>
<dbReference type="Pfam" id="PF00702">
    <property type="entry name" value="Hydrolase"/>
    <property type="match status" value="1"/>
</dbReference>
<dbReference type="SFLD" id="SFLDG01129">
    <property type="entry name" value="C1.5:_HAD__Beta-PGM__Phosphata"/>
    <property type="match status" value="1"/>
</dbReference>
<dbReference type="SFLD" id="SFLDS00003">
    <property type="entry name" value="Haloacid_Dehalogenase"/>
    <property type="match status" value="1"/>
</dbReference>
<dbReference type="SUPFAM" id="SSF56784">
    <property type="entry name" value="HAD-like"/>
    <property type="match status" value="1"/>
</dbReference>
<keyword id="KW-0378">Hydrolase</keyword>
<keyword id="KW-0460">Magnesium</keyword>
<keyword id="KW-0479">Metal-binding</keyword>
<keyword id="KW-1185">Reference proteome</keyword>